<protein>
    <recommendedName>
        <fullName evidence="5">Sialate:O-sulfotransferase 1</fullName>
    </recommendedName>
    <alternativeName>
        <fullName>WSC domain-containing protein 1</fullName>
    </alternativeName>
</protein>
<dbReference type="EMBL" id="AK220346">
    <property type="protein sequence ID" value="BAD90411.1"/>
    <property type="status" value="ALT_INIT"/>
    <property type="molecule type" value="mRNA"/>
</dbReference>
<dbReference type="EMBL" id="AK049137">
    <property type="protein sequence ID" value="BAC33564.1"/>
    <property type="molecule type" value="mRNA"/>
</dbReference>
<dbReference type="EMBL" id="AK163944">
    <property type="protein sequence ID" value="BAE37545.1"/>
    <property type="molecule type" value="mRNA"/>
</dbReference>
<dbReference type="EMBL" id="AL672010">
    <property type="status" value="NOT_ANNOTATED_CDS"/>
    <property type="molecule type" value="Genomic_DNA"/>
</dbReference>
<dbReference type="EMBL" id="BC048831">
    <property type="protein sequence ID" value="AAH48831.1"/>
    <property type="molecule type" value="mRNA"/>
</dbReference>
<dbReference type="EMBL" id="BC063070">
    <property type="protein sequence ID" value="AAH63070.1"/>
    <property type="molecule type" value="mRNA"/>
</dbReference>
<dbReference type="CCDS" id="CCDS24975.1">
    <molecule id="Q80XH4-1"/>
</dbReference>
<dbReference type="RefSeq" id="NP_001344889.1">
    <molecule id="Q80XH4-1"/>
    <property type="nucleotide sequence ID" value="NM_001357960.1"/>
</dbReference>
<dbReference type="RefSeq" id="NP_001344894.1">
    <molecule id="Q80XH4-1"/>
    <property type="nucleotide sequence ID" value="NM_001357965.1"/>
</dbReference>
<dbReference type="RefSeq" id="NP_808286.2">
    <molecule id="Q80XH4-1"/>
    <property type="nucleotide sequence ID" value="NM_177618.4"/>
</dbReference>
<dbReference type="RefSeq" id="XP_006532991.1">
    <property type="nucleotide sequence ID" value="XM_006532928.3"/>
</dbReference>
<dbReference type="RefSeq" id="XP_006532992.1">
    <molecule id="Q80XH4-1"/>
    <property type="nucleotide sequence ID" value="XM_006532929.4"/>
</dbReference>
<dbReference type="RefSeq" id="XP_006532993.1">
    <property type="nucleotide sequence ID" value="XM_006532930.3"/>
</dbReference>
<dbReference type="RefSeq" id="XP_006532994.1">
    <molecule id="Q80XH4-1"/>
    <property type="nucleotide sequence ID" value="XM_006532931.5"/>
</dbReference>
<dbReference type="RefSeq" id="XP_036012470.1">
    <molecule id="Q80XH4-1"/>
    <property type="nucleotide sequence ID" value="XM_036156577.1"/>
</dbReference>
<dbReference type="SMR" id="Q80XH4"/>
<dbReference type="FunCoup" id="Q80XH4">
    <property type="interactions" value="21"/>
</dbReference>
<dbReference type="STRING" id="10090.ENSMUSP00000104150"/>
<dbReference type="GlyCosmos" id="Q80XH4">
    <property type="glycosylation" value="2 sites, No reported glycans"/>
</dbReference>
<dbReference type="GlyGen" id="Q80XH4">
    <property type="glycosylation" value="4 sites, 1 N-linked glycan (1 site)"/>
</dbReference>
<dbReference type="iPTMnet" id="Q80XH4"/>
<dbReference type="PhosphoSitePlus" id="Q80XH4"/>
<dbReference type="PaxDb" id="10090-ENSMUSP00000021168"/>
<dbReference type="PeptideAtlas" id="Q80XH4"/>
<dbReference type="ProteomicsDB" id="275219">
    <molecule id="Q80XH4-1"/>
</dbReference>
<dbReference type="ProteomicsDB" id="275220">
    <molecule id="Q80XH4-2"/>
</dbReference>
<dbReference type="Antibodypedia" id="2667">
    <property type="antibodies" value="12 antibodies from 9 providers"/>
</dbReference>
<dbReference type="DNASU" id="216881"/>
<dbReference type="Ensembl" id="ENSMUST00000021168.14">
    <molecule id="Q80XH4-1"/>
    <property type="protein sequence ID" value="ENSMUSP00000021168.8"/>
    <property type="gene ID" value="ENSMUSG00000020811.17"/>
</dbReference>
<dbReference type="Ensembl" id="ENSMUST00000108510.2">
    <molecule id="Q80XH4-1"/>
    <property type="protein sequence ID" value="ENSMUSP00000104150.2"/>
    <property type="gene ID" value="ENSMUSG00000020811.17"/>
</dbReference>
<dbReference type="Ensembl" id="ENSMUST00000108511.8">
    <molecule id="Q80XH4-1"/>
    <property type="protein sequence ID" value="ENSMUSP00000104151.2"/>
    <property type="gene ID" value="ENSMUSG00000020811.17"/>
</dbReference>
<dbReference type="GeneID" id="216881"/>
<dbReference type="KEGG" id="mmu:216881"/>
<dbReference type="UCSC" id="uc007jxv.1">
    <molecule id="Q80XH4-1"/>
    <property type="organism name" value="mouse"/>
</dbReference>
<dbReference type="UCSC" id="uc007jxx.1">
    <molecule id="Q80XH4-2"/>
    <property type="organism name" value="mouse"/>
</dbReference>
<dbReference type="AGR" id="MGI:2448493"/>
<dbReference type="CTD" id="23302"/>
<dbReference type="MGI" id="MGI:2448493">
    <property type="gene designation" value="Wscd1"/>
</dbReference>
<dbReference type="VEuPathDB" id="HostDB:ENSMUSG00000020811"/>
<dbReference type="eggNOG" id="KOG4157">
    <property type="taxonomic scope" value="Eukaryota"/>
</dbReference>
<dbReference type="GeneTree" id="ENSGT00940000158096"/>
<dbReference type="HOGENOM" id="CLU_029239_1_0_1"/>
<dbReference type="InParanoid" id="Q80XH4"/>
<dbReference type="OMA" id="KYAGHLG"/>
<dbReference type="OrthoDB" id="5985073at2759"/>
<dbReference type="PhylomeDB" id="Q80XH4"/>
<dbReference type="TreeFam" id="TF324060"/>
<dbReference type="BioGRID-ORCS" id="216881">
    <property type="hits" value="1 hit in 76 CRISPR screens"/>
</dbReference>
<dbReference type="ChiTaRS" id="Wscd1">
    <property type="organism name" value="mouse"/>
</dbReference>
<dbReference type="PRO" id="PR:Q80XH4"/>
<dbReference type="Proteomes" id="UP000000589">
    <property type="component" value="Chromosome 11"/>
</dbReference>
<dbReference type="RNAct" id="Q80XH4">
    <property type="molecule type" value="protein"/>
</dbReference>
<dbReference type="Bgee" id="ENSMUSG00000020811">
    <property type="expression patterns" value="Expressed in cranial nerve II and 163 other cell types or tissues"/>
</dbReference>
<dbReference type="ExpressionAtlas" id="Q80XH4">
    <property type="expression patterns" value="baseline and differential"/>
</dbReference>
<dbReference type="GO" id="GO:0000139">
    <property type="term" value="C:Golgi membrane"/>
    <property type="evidence" value="ECO:0000314"/>
    <property type="project" value="UniProtKB"/>
</dbReference>
<dbReference type="GO" id="GO:0008146">
    <property type="term" value="F:sulfotransferase activity"/>
    <property type="evidence" value="ECO:0000314"/>
    <property type="project" value="UniProtKB"/>
</dbReference>
<dbReference type="Gene3D" id="3.40.50.300">
    <property type="entry name" value="P-loop containing nucleotide triphosphate hydrolases"/>
    <property type="match status" value="1"/>
</dbReference>
<dbReference type="InterPro" id="IPR027417">
    <property type="entry name" value="P-loop_NTPase"/>
</dbReference>
<dbReference type="InterPro" id="IPR051589">
    <property type="entry name" value="Sialate-O-sulfotransferase"/>
</dbReference>
<dbReference type="InterPro" id="IPR000863">
    <property type="entry name" value="Sulfotransferase_dom"/>
</dbReference>
<dbReference type="InterPro" id="IPR002889">
    <property type="entry name" value="WSC_carb-bd"/>
</dbReference>
<dbReference type="PANTHER" id="PTHR45964:SF8">
    <property type="entry name" value="SIALATE:O-SULFOTRANSFERASE 1"/>
    <property type="match status" value="1"/>
</dbReference>
<dbReference type="PANTHER" id="PTHR45964">
    <property type="entry name" value="WSCD FAMILY MEMBER CG9164"/>
    <property type="match status" value="1"/>
</dbReference>
<dbReference type="Pfam" id="PF00685">
    <property type="entry name" value="Sulfotransfer_1"/>
    <property type="match status" value="1"/>
</dbReference>
<dbReference type="Pfam" id="PF01822">
    <property type="entry name" value="WSC"/>
    <property type="match status" value="2"/>
</dbReference>
<dbReference type="SMART" id="SM00321">
    <property type="entry name" value="WSC"/>
    <property type="match status" value="2"/>
</dbReference>
<dbReference type="SUPFAM" id="SSF52540">
    <property type="entry name" value="P-loop containing nucleoside triphosphate hydrolases"/>
    <property type="match status" value="1"/>
</dbReference>
<dbReference type="PROSITE" id="PS51212">
    <property type="entry name" value="WSC"/>
    <property type="match status" value="2"/>
</dbReference>
<proteinExistence type="evidence at protein level"/>
<name>WSCD1_MOUSE</name>
<gene>
    <name type="primary">Wscd1</name>
    <name type="synonym">Kiaa0523</name>
</gene>
<keyword id="KW-0025">Alternative splicing</keyword>
<keyword id="KW-0325">Glycoprotein</keyword>
<keyword id="KW-0333">Golgi apparatus</keyword>
<keyword id="KW-0472">Membrane</keyword>
<keyword id="KW-1185">Reference proteome</keyword>
<keyword id="KW-0677">Repeat</keyword>
<keyword id="KW-0735">Signal-anchor</keyword>
<keyword id="KW-0812">Transmembrane</keyword>
<keyword id="KW-1133">Transmembrane helix</keyword>
<sequence length="572" mass="64981">MAKPFFRLQKFLRRTQFLLLFLTAAYLMTGSLLLLQRARVALPQALRAPGSLQALPVATVALGVGLLDGRSLRDPHSSPDLLLDVDTLRSPLARLPPGIRWPRRNRSSLRRRWLHHLTSDPQGPPTLSPEASGPANHNRGNYLGCFSEEGQERTLKGAVFYDLRKMTVSHCQDACAERSYVYAGLEAGAECYCGNRLPATRVSLKECNQECKGEKGSMCGAVRRLSVYSVGLQQPGSKKRRTATYRGCFPLPENVTHTFSSSMTQANMTVETCSGFCSQKEFPLAILRGWDCYCAYPTPQFSLRDAVDGALCSQAPETQGLPGYCEVYQTPVQDTRCTDRKFLPDKSKVFVALSSFPGAGNTWARHLIEHATGFYTGSYYFDGTLYNKGFKGEKDHWRSRRTICVKTHESGRREIEMFDSAILLIRNPYRSLVAEFNRKCAGHLGYAPDRNWKSKEWPEFVNSYASWWSSHVLDWLKYGKRLLVVHYEELRHSLVPTLREMVAFLNVSVSEERLLCVENNKEGSFRRRGRRPHDQEPFTPEMKDLINGYIRTVDQALRDHNWAGLPREYVPR</sequence>
<reference key="1">
    <citation type="submission" date="2005-02" db="EMBL/GenBank/DDBJ databases">
        <title>Prediction of the coding sequences of mouse homologues of KIAA gene. The complete nucleotide sequences of mouse KIAA-homologous cDNAs identified by screening of terminal sequences of cDNA clones randomly sampled from size-fractionated libraries.</title>
        <authorList>
            <person name="Okazaki N."/>
            <person name="Kikuno R.F."/>
            <person name="Ohara R."/>
            <person name="Inamoto S."/>
            <person name="Nagase T."/>
            <person name="Ohara O."/>
            <person name="Koga H."/>
        </authorList>
    </citation>
    <scope>NUCLEOTIDE SEQUENCE [LARGE SCALE MRNA] (ISOFORM 1)</scope>
    <source>
        <tissue>Brain</tissue>
    </source>
</reference>
<reference key="2">
    <citation type="journal article" date="2005" name="Science">
        <title>The transcriptional landscape of the mammalian genome.</title>
        <authorList>
            <person name="Carninci P."/>
            <person name="Kasukawa T."/>
            <person name="Katayama S."/>
            <person name="Gough J."/>
            <person name="Frith M.C."/>
            <person name="Maeda N."/>
            <person name="Oyama R."/>
            <person name="Ravasi T."/>
            <person name="Lenhard B."/>
            <person name="Wells C."/>
            <person name="Kodzius R."/>
            <person name="Shimokawa K."/>
            <person name="Bajic V.B."/>
            <person name="Brenner S.E."/>
            <person name="Batalov S."/>
            <person name="Forrest A.R."/>
            <person name="Zavolan M."/>
            <person name="Davis M.J."/>
            <person name="Wilming L.G."/>
            <person name="Aidinis V."/>
            <person name="Allen J.E."/>
            <person name="Ambesi-Impiombato A."/>
            <person name="Apweiler R."/>
            <person name="Aturaliya R.N."/>
            <person name="Bailey T.L."/>
            <person name="Bansal M."/>
            <person name="Baxter L."/>
            <person name="Beisel K.W."/>
            <person name="Bersano T."/>
            <person name="Bono H."/>
            <person name="Chalk A.M."/>
            <person name="Chiu K.P."/>
            <person name="Choudhary V."/>
            <person name="Christoffels A."/>
            <person name="Clutterbuck D.R."/>
            <person name="Crowe M.L."/>
            <person name="Dalla E."/>
            <person name="Dalrymple B.P."/>
            <person name="de Bono B."/>
            <person name="Della Gatta G."/>
            <person name="di Bernardo D."/>
            <person name="Down T."/>
            <person name="Engstrom P."/>
            <person name="Fagiolini M."/>
            <person name="Faulkner G."/>
            <person name="Fletcher C.F."/>
            <person name="Fukushima T."/>
            <person name="Furuno M."/>
            <person name="Futaki S."/>
            <person name="Gariboldi M."/>
            <person name="Georgii-Hemming P."/>
            <person name="Gingeras T.R."/>
            <person name="Gojobori T."/>
            <person name="Green R.E."/>
            <person name="Gustincich S."/>
            <person name="Harbers M."/>
            <person name="Hayashi Y."/>
            <person name="Hensch T.K."/>
            <person name="Hirokawa N."/>
            <person name="Hill D."/>
            <person name="Huminiecki L."/>
            <person name="Iacono M."/>
            <person name="Ikeo K."/>
            <person name="Iwama A."/>
            <person name="Ishikawa T."/>
            <person name="Jakt M."/>
            <person name="Kanapin A."/>
            <person name="Katoh M."/>
            <person name="Kawasawa Y."/>
            <person name="Kelso J."/>
            <person name="Kitamura H."/>
            <person name="Kitano H."/>
            <person name="Kollias G."/>
            <person name="Krishnan S.P."/>
            <person name="Kruger A."/>
            <person name="Kummerfeld S.K."/>
            <person name="Kurochkin I.V."/>
            <person name="Lareau L.F."/>
            <person name="Lazarevic D."/>
            <person name="Lipovich L."/>
            <person name="Liu J."/>
            <person name="Liuni S."/>
            <person name="McWilliam S."/>
            <person name="Madan Babu M."/>
            <person name="Madera M."/>
            <person name="Marchionni L."/>
            <person name="Matsuda H."/>
            <person name="Matsuzawa S."/>
            <person name="Miki H."/>
            <person name="Mignone F."/>
            <person name="Miyake S."/>
            <person name="Morris K."/>
            <person name="Mottagui-Tabar S."/>
            <person name="Mulder N."/>
            <person name="Nakano N."/>
            <person name="Nakauchi H."/>
            <person name="Ng P."/>
            <person name="Nilsson R."/>
            <person name="Nishiguchi S."/>
            <person name="Nishikawa S."/>
            <person name="Nori F."/>
            <person name="Ohara O."/>
            <person name="Okazaki Y."/>
            <person name="Orlando V."/>
            <person name="Pang K.C."/>
            <person name="Pavan W.J."/>
            <person name="Pavesi G."/>
            <person name="Pesole G."/>
            <person name="Petrovsky N."/>
            <person name="Piazza S."/>
            <person name="Reed J."/>
            <person name="Reid J.F."/>
            <person name="Ring B.Z."/>
            <person name="Ringwald M."/>
            <person name="Rost B."/>
            <person name="Ruan Y."/>
            <person name="Salzberg S.L."/>
            <person name="Sandelin A."/>
            <person name="Schneider C."/>
            <person name="Schoenbach C."/>
            <person name="Sekiguchi K."/>
            <person name="Semple C.A."/>
            <person name="Seno S."/>
            <person name="Sessa L."/>
            <person name="Sheng Y."/>
            <person name="Shibata Y."/>
            <person name="Shimada H."/>
            <person name="Shimada K."/>
            <person name="Silva D."/>
            <person name="Sinclair B."/>
            <person name="Sperling S."/>
            <person name="Stupka E."/>
            <person name="Sugiura K."/>
            <person name="Sultana R."/>
            <person name="Takenaka Y."/>
            <person name="Taki K."/>
            <person name="Tammoja K."/>
            <person name="Tan S.L."/>
            <person name="Tang S."/>
            <person name="Taylor M.S."/>
            <person name="Tegner J."/>
            <person name="Teichmann S.A."/>
            <person name="Ueda H.R."/>
            <person name="van Nimwegen E."/>
            <person name="Verardo R."/>
            <person name="Wei C.L."/>
            <person name="Yagi K."/>
            <person name="Yamanishi H."/>
            <person name="Zabarovsky E."/>
            <person name="Zhu S."/>
            <person name="Zimmer A."/>
            <person name="Hide W."/>
            <person name="Bult C."/>
            <person name="Grimmond S.M."/>
            <person name="Teasdale R.D."/>
            <person name="Liu E.T."/>
            <person name="Brusic V."/>
            <person name="Quackenbush J."/>
            <person name="Wahlestedt C."/>
            <person name="Mattick J.S."/>
            <person name="Hume D.A."/>
            <person name="Kai C."/>
            <person name="Sasaki D."/>
            <person name="Tomaru Y."/>
            <person name="Fukuda S."/>
            <person name="Kanamori-Katayama M."/>
            <person name="Suzuki M."/>
            <person name="Aoki J."/>
            <person name="Arakawa T."/>
            <person name="Iida J."/>
            <person name="Imamura K."/>
            <person name="Itoh M."/>
            <person name="Kato T."/>
            <person name="Kawaji H."/>
            <person name="Kawagashira N."/>
            <person name="Kawashima T."/>
            <person name="Kojima M."/>
            <person name="Kondo S."/>
            <person name="Konno H."/>
            <person name="Nakano K."/>
            <person name="Ninomiya N."/>
            <person name="Nishio T."/>
            <person name="Okada M."/>
            <person name="Plessy C."/>
            <person name="Shibata K."/>
            <person name="Shiraki T."/>
            <person name="Suzuki S."/>
            <person name="Tagami M."/>
            <person name="Waki K."/>
            <person name="Watahiki A."/>
            <person name="Okamura-Oho Y."/>
            <person name="Suzuki H."/>
            <person name="Kawai J."/>
            <person name="Hayashizaki Y."/>
        </authorList>
    </citation>
    <scope>NUCLEOTIDE SEQUENCE [LARGE SCALE MRNA] (ISOFORM 2)</scope>
    <scope>NUCLEOTIDE SEQUENCE [LARGE SCALE MRNA] OF 521-572 (ISOFORM 1)</scope>
    <source>
        <strain>C57BL/6J</strain>
        <tissue>Cerebellum</tissue>
    </source>
</reference>
<reference key="3">
    <citation type="journal article" date="2009" name="PLoS Biol.">
        <title>Lineage-specific biology revealed by a finished genome assembly of the mouse.</title>
        <authorList>
            <person name="Church D.M."/>
            <person name="Goodstadt L."/>
            <person name="Hillier L.W."/>
            <person name="Zody M.C."/>
            <person name="Goldstein S."/>
            <person name="She X."/>
            <person name="Bult C.J."/>
            <person name="Agarwala R."/>
            <person name="Cherry J.L."/>
            <person name="DiCuccio M."/>
            <person name="Hlavina W."/>
            <person name="Kapustin Y."/>
            <person name="Meric P."/>
            <person name="Maglott D."/>
            <person name="Birtle Z."/>
            <person name="Marques A.C."/>
            <person name="Graves T."/>
            <person name="Zhou S."/>
            <person name="Teague B."/>
            <person name="Potamousis K."/>
            <person name="Churas C."/>
            <person name="Place M."/>
            <person name="Herschleb J."/>
            <person name="Runnheim R."/>
            <person name="Forrest D."/>
            <person name="Amos-Landgraf J."/>
            <person name="Schwartz D.C."/>
            <person name="Cheng Z."/>
            <person name="Lindblad-Toh K."/>
            <person name="Eichler E.E."/>
            <person name="Ponting C.P."/>
        </authorList>
    </citation>
    <scope>NUCLEOTIDE SEQUENCE [LARGE SCALE GENOMIC DNA]</scope>
    <source>
        <strain>C57BL/6J</strain>
    </source>
</reference>
<reference key="4">
    <citation type="journal article" date="2004" name="Genome Res.">
        <title>The status, quality, and expansion of the NIH full-length cDNA project: the Mammalian Gene Collection (MGC).</title>
        <authorList>
            <consortium name="The MGC Project Team"/>
        </authorList>
    </citation>
    <scope>NUCLEOTIDE SEQUENCE [LARGE SCALE MRNA] (ISOFORM 1)</scope>
    <source>
        <strain>C57BL/6J</strain>
        <tissue>Brain</tissue>
        <tissue>Eye</tissue>
    </source>
</reference>
<reference key="5">
    <citation type="journal article" date="2022" name="Sci. Rep.">
        <title>Sulfation of sialic acid is ubiquitous and essential for vertebrate development.</title>
        <authorList>
            <person name="Ertunc N."/>
            <person name="Phitak T."/>
            <person name="Wu D."/>
            <person name="Fujita H."/>
            <person name="Hane M."/>
            <person name="Sato C."/>
            <person name="Kitajima K."/>
        </authorList>
    </citation>
    <scope>FUNCTION</scope>
    <scope>CATALYTIC ACTIVITY</scope>
    <scope>SUBCELLULAR LOCATION</scope>
    <scope>TOPOLOGY</scope>
    <scope>MUTAGENESIS OF PRO-357; GLY-360; THR-362 AND TRP-363</scope>
</reference>
<comment type="function">
    <text evidence="3">Sialate:O-sulfotransferase which catalyzes 8-O-sulfation at the Sia-glycan level using 3'-phosphoadenosine 5'-phosphosulfate (PAPS) as a donor, forming 8-O-sulfated Sia (Sia8S)-glycans. Displays selectivity toward glycolipids such as GM1 gangliosides.</text>
</comment>
<comment type="catalytic activity">
    <reaction evidence="3">
        <text>a ganglioside GM1b + 3'-phosphoadenylyl sulfate = an 8-O-sulfo-ganglioside GM1b + adenosine 3',5'-bisphosphate + H(+)</text>
        <dbReference type="Rhea" id="RHEA:74843"/>
        <dbReference type="ChEBI" id="CHEBI:15378"/>
        <dbReference type="ChEBI" id="CHEBI:58339"/>
        <dbReference type="ChEBI" id="CHEBI:58343"/>
        <dbReference type="ChEBI" id="CHEBI:90151"/>
        <dbReference type="ChEBI" id="CHEBI:194084"/>
    </reaction>
    <physiologicalReaction direction="left-to-right" evidence="3">
        <dbReference type="Rhea" id="RHEA:74844"/>
    </physiologicalReaction>
</comment>
<comment type="subcellular location">
    <subcellularLocation>
        <location evidence="3">Golgi apparatus membrane</location>
        <topology evidence="7">Single-pass type II membrane protein</topology>
    </subcellularLocation>
</comment>
<comment type="alternative products">
    <event type="alternative splicing"/>
    <isoform>
        <id>Q80XH4-1</id>
        <name>1</name>
        <sequence type="displayed"/>
    </isoform>
    <isoform>
        <id>Q80XH4-2</id>
        <name>2</name>
        <sequence type="described" ref="VSP_028209 VSP_028210"/>
    </isoform>
</comment>
<comment type="similarity">
    <text evidence="6">Belongs to the WSCD family.</text>
</comment>
<comment type="sequence caution" evidence="6">
    <conflict type="erroneous initiation">
        <sequence resource="EMBL-CDS" id="BAD90411"/>
    </conflict>
    <text>Extended N-terminus.</text>
</comment>
<accession>Q80XH4</accession>
<accession>Q3TQ40</accession>
<accession>Q5DU24</accession>
<accession>Q8BX34</accession>
<feature type="chain" id="PRO_0000305062" description="Sialate:O-sulfotransferase 1">
    <location>
        <begin position="1"/>
        <end position="572"/>
    </location>
</feature>
<feature type="topological domain" description="Cytoplasmic" evidence="7">
    <location>
        <begin position="1"/>
        <end position="14"/>
    </location>
</feature>
<feature type="transmembrane region" description="Helical; Signal-anchor for type II membrane protein" evidence="1">
    <location>
        <begin position="15"/>
        <end position="35"/>
    </location>
</feature>
<feature type="topological domain" description="Extracellular" evidence="7">
    <location>
        <begin position="36"/>
        <end position="572"/>
    </location>
</feature>
<feature type="domain" description="WSC 1" evidence="2">
    <location>
        <begin position="139"/>
        <end position="231"/>
    </location>
</feature>
<feature type="domain" description="WSC 2" evidence="2">
    <location>
        <begin position="242"/>
        <end position="337"/>
    </location>
</feature>
<feature type="glycosylation site" description="N-linked (GlcNAc...) asparagine" evidence="1">
    <location>
        <position position="105"/>
    </location>
</feature>
<feature type="glycosylation site" description="N-linked (GlcNAc...) asparagine" evidence="1">
    <location>
        <position position="254"/>
    </location>
</feature>
<feature type="splice variant" id="VSP_028209" description="In isoform 2." evidence="4">
    <original>NYLGCFSEEGQERTLKGAVFYDLRKMTVSHCQDACAERSYVYAGLEAGAECYCGNRLPATRVSLKECNQECKGEKG</original>
    <variation>SFSASATSLLRVICIVSFLGPAVAEEYDIVPRSSDFDFASVTASWVTLIMSPVSGSSQVETETLTPGLLCKCIEVS</variation>
    <location>
        <begin position="141"/>
        <end position="216"/>
    </location>
</feature>
<feature type="splice variant" id="VSP_028210" description="In isoform 2." evidence="4">
    <location>
        <begin position="217"/>
        <end position="572"/>
    </location>
</feature>
<feature type="mutagenesis site" description="Markedly decreases the expression of Neu5Ac8S epitope; when associated with A-360, A-362 and A-363." evidence="3">
    <original>P</original>
    <variation>A</variation>
    <location>
        <position position="357"/>
    </location>
</feature>
<feature type="mutagenesis site" description="Markedly decreases the expression of Neu5Ac8S epitope; when associated with A-357, A-362 and A-363." evidence="3">
    <original>G</original>
    <variation>A</variation>
    <location>
        <position position="360"/>
    </location>
</feature>
<feature type="mutagenesis site" description="Markedly decreases the expression of Neu5Ac8S epitope; when associated with A-357, A-360 and A-363." evidence="3">
    <original>T</original>
    <variation>A</variation>
    <location>
        <position position="362"/>
    </location>
</feature>
<feature type="mutagenesis site" description="Markedly decreases the expression of Neu5Ac8S epitope; when associated with A-357, A-360 and A-362." evidence="3">
    <original>W</original>
    <variation>A</variation>
    <location>
        <position position="363"/>
    </location>
</feature>
<feature type="sequence conflict" description="In Ref. 2; BAC33564." evidence="6" ref="2">
    <original>G</original>
    <variation>S</variation>
    <location>
        <position position="50"/>
    </location>
</feature>
<feature type="sequence conflict" description="In Ref. 1; BAD90411." evidence="6" ref="1">
    <original>D</original>
    <variation>N</variation>
    <location>
        <position position="345"/>
    </location>
</feature>
<evidence type="ECO:0000255" key="1"/>
<evidence type="ECO:0000255" key="2">
    <source>
        <dbReference type="PROSITE-ProRule" id="PRU00558"/>
    </source>
</evidence>
<evidence type="ECO:0000269" key="3">
    <source>
    </source>
</evidence>
<evidence type="ECO:0000303" key="4">
    <source>
    </source>
</evidence>
<evidence type="ECO:0000303" key="5">
    <source>
    </source>
</evidence>
<evidence type="ECO:0000305" key="6"/>
<evidence type="ECO:0000305" key="7">
    <source>
    </source>
</evidence>
<organism>
    <name type="scientific">Mus musculus</name>
    <name type="common">Mouse</name>
    <dbReference type="NCBI Taxonomy" id="10090"/>
    <lineage>
        <taxon>Eukaryota</taxon>
        <taxon>Metazoa</taxon>
        <taxon>Chordata</taxon>
        <taxon>Craniata</taxon>
        <taxon>Vertebrata</taxon>
        <taxon>Euteleostomi</taxon>
        <taxon>Mammalia</taxon>
        <taxon>Eutheria</taxon>
        <taxon>Euarchontoglires</taxon>
        <taxon>Glires</taxon>
        <taxon>Rodentia</taxon>
        <taxon>Myomorpha</taxon>
        <taxon>Muroidea</taxon>
        <taxon>Muridae</taxon>
        <taxon>Murinae</taxon>
        <taxon>Mus</taxon>
        <taxon>Mus</taxon>
    </lineage>
</organism>